<accession>B7LVJ9</accession>
<proteinExistence type="inferred from homology"/>
<protein>
    <recommendedName>
        <fullName evidence="1">UPF0758 protein YicR</fullName>
    </recommendedName>
</protein>
<gene>
    <name evidence="1" type="primary">yicR</name>
    <name type="ordered locus">EFER_3929</name>
</gene>
<name>YICR_ESCF3</name>
<keyword id="KW-0378">Hydrolase</keyword>
<keyword id="KW-0479">Metal-binding</keyword>
<keyword id="KW-0482">Metalloprotease</keyword>
<keyword id="KW-0645">Protease</keyword>
<keyword id="KW-0862">Zinc</keyword>
<comment type="similarity">
    <text evidence="1">Belongs to the UPF0758 family. YicR subfamily.</text>
</comment>
<sequence length="222" mass="25258">MKNNAQLLMPREKMLKFGISALTDVELLALFLRTGTRGKDVLTLAKEMLENFGSLYGLLTSEYEQFSGVHGIGVAKFAQLKGIAELARRYYNVRMREESPLLSPEMTREFLQSQLTGEEREIFMVIFLDSQHRVITHSRLFSGTLNHVEVHPREIIREAIKINASALILAHNHPSGCAEPSKADKLITERIIKSCQFMDLRVLDHIVIGRGEYVSFAERGWI</sequence>
<dbReference type="EMBL" id="CU928158">
    <property type="protein sequence ID" value="CAQ91363.1"/>
    <property type="molecule type" value="Genomic_DNA"/>
</dbReference>
<dbReference type="SMR" id="B7LVJ9"/>
<dbReference type="KEGG" id="efe:EFER_3929"/>
<dbReference type="HOGENOM" id="CLU_073529_0_1_6"/>
<dbReference type="OrthoDB" id="9804482at2"/>
<dbReference type="Proteomes" id="UP000000745">
    <property type="component" value="Chromosome"/>
</dbReference>
<dbReference type="GO" id="GO:0046872">
    <property type="term" value="F:metal ion binding"/>
    <property type="evidence" value="ECO:0007669"/>
    <property type="project" value="UniProtKB-KW"/>
</dbReference>
<dbReference type="GO" id="GO:0008237">
    <property type="term" value="F:metallopeptidase activity"/>
    <property type="evidence" value="ECO:0007669"/>
    <property type="project" value="UniProtKB-KW"/>
</dbReference>
<dbReference type="GO" id="GO:0006508">
    <property type="term" value="P:proteolysis"/>
    <property type="evidence" value="ECO:0007669"/>
    <property type="project" value="UniProtKB-KW"/>
</dbReference>
<dbReference type="CDD" id="cd08071">
    <property type="entry name" value="MPN_DUF2466"/>
    <property type="match status" value="1"/>
</dbReference>
<dbReference type="Gene3D" id="3.40.140.10">
    <property type="entry name" value="Cytidine Deaminase, domain 2"/>
    <property type="match status" value="1"/>
</dbReference>
<dbReference type="HAMAP" id="MF_00018">
    <property type="entry name" value="UPF0758_YicR"/>
    <property type="match status" value="1"/>
</dbReference>
<dbReference type="InterPro" id="IPR037518">
    <property type="entry name" value="MPN"/>
</dbReference>
<dbReference type="InterPro" id="IPR025657">
    <property type="entry name" value="RadC_JAB"/>
</dbReference>
<dbReference type="InterPro" id="IPR010994">
    <property type="entry name" value="RuvA_2-like"/>
</dbReference>
<dbReference type="InterPro" id="IPR001405">
    <property type="entry name" value="UPF0758"/>
</dbReference>
<dbReference type="InterPro" id="IPR020891">
    <property type="entry name" value="UPF0758_CS"/>
</dbReference>
<dbReference type="InterPro" id="IPR046778">
    <property type="entry name" value="UPF0758_N"/>
</dbReference>
<dbReference type="InterPro" id="IPR022820">
    <property type="entry name" value="UPF0758_YicR"/>
</dbReference>
<dbReference type="NCBIfam" id="NF000642">
    <property type="entry name" value="PRK00024.1"/>
    <property type="match status" value="1"/>
</dbReference>
<dbReference type="NCBIfam" id="TIGR00608">
    <property type="entry name" value="radc"/>
    <property type="match status" value="1"/>
</dbReference>
<dbReference type="PANTHER" id="PTHR30471">
    <property type="entry name" value="DNA REPAIR PROTEIN RADC"/>
    <property type="match status" value="1"/>
</dbReference>
<dbReference type="PANTHER" id="PTHR30471:SF3">
    <property type="entry name" value="UPF0758 PROTEIN YEES-RELATED"/>
    <property type="match status" value="1"/>
</dbReference>
<dbReference type="Pfam" id="PF04002">
    <property type="entry name" value="RadC"/>
    <property type="match status" value="1"/>
</dbReference>
<dbReference type="Pfam" id="PF20582">
    <property type="entry name" value="UPF0758_N"/>
    <property type="match status" value="1"/>
</dbReference>
<dbReference type="SUPFAM" id="SSF47781">
    <property type="entry name" value="RuvA domain 2-like"/>
    <property type="match status" value="1"/>
</dbReference>
<dbReference type="PROSITE" id="PS50249">
    <property type="entry name" value="MPN"/>
    <property type="match status" value="1"/>
</dbReference>
<dbReference type="PROSITE" id="PS01302">
    <property type="entry name" value="UPF0758"/>
    <property type="match status" value="1"/>
</dbReference>
<evidence type="ECO:0000255" key="1">
    <source>
        <dbReference type="HAMAP-Rule" id="MF_00018"/>
    </source>
</evidence>
<evidence type="ECO:0000255" key="2">
    <source>
        <dbReference type="PROSITE-ProRule" id="PRU01182"/>
    </source>
</evidence>
<reference key="1">
    <citation type="journal article" date="2009" name="PLoS Genet.">
        <title>Organised genome dynamics in the Escherichia coli species results in highly diverse adaptive paths.</title>
        <authorList>
            <person name="Touchon M."/>
            <person name="Hoede C."/>
            <person name="Tenaillon O."/>
            <person name="Barbe V."/>
            <person name="Baeriswyl S."/>
            <person name="Bidet P."/>
            <person name="Bingen E."/>
            <person name="Bonacorsi S."/>
            <person name="Bouchier C."/>
            <person name="Bouvet O."/>
            <person name="Calteau A."/>
            <person name="Chiapello H."/>
            <person name="Clermont O."/>
            <person name="Cruveiller S."/>
            <person name="Danchin A."/>
            <person name="Diard M."/>
            <person name="Dossat C."/>
            <person name="Karoui M.E."/>
            <person name="Frapy E."/>
            <person name="Garry L."/>
            <person name="Ghigo J.M."/>
            <person name="Gilles A.M."/>
            <person name="Johnson J."/>
            <person name="Le Bouguenec C."/>
            <person name="Lescat M."/>
            <person name="Mangenot S."/>
            <person name="Martinez-Jehanne V."/>
            <person name="Matic I."/>
            <person name="Nassif X."/>
            <person name="Oztas S."/>
            <person name="Petit M.A."/>
            <person name="Pichon C."/>
            <person name="Rouy Z."/>
            <person name="Ruf C.S."/>
            <person name="Schneider D."/>
            <person name="Tourret J."/>
            <person name="Vacherie B."/>
            <person name="Vallenet D."/>
            <person name="Medigue C."/>
            <person name="Rocha E.P.C."/>
            <person name="Denamur E."/>
        </authorList>
    </citation>
    <scope>NUCLEOTIDE SEQUENCE [LARGE SCALE GENOMIC DNA]</scope>
    <source>
        <strain>ATCC 35469 / DSM 13698 / BCRC 15582 / CCUG 18766 / IAM 14443 / JCM 21226 / LMG 7866 / NBRC 102419 / NCTC 12128 / CDC 0568-73</strain>
    </source>
</reference>
<feature type="chain" id="PRO_1000116359" description="UPF0758 protein YicR">
    <location>
        <begin position="1"/>
        <end position="222"/>
    </location>
</feature>
<feature type="domain" description="MPN" evidence="2">
    <location>
        <begin position="100"/>
        <end position="222"/>
    </location>
</feature>
<feature type="short sequence motif" description="JAMM motif" evidence="2">
    <location>
        <begin position="171"/>
        <end position="184"/>
    </location>
</feature>
<feature type="binding site" evidence="2">
    <location>
        <position position="171"/>
    </location>
    <ligand>
        <name>Zn(2+)</name>
        <dbReference type="ChEBI" id="CHEBI:29105"/>
        <note>catalytic</note>
    </ligand>
</feature>
<feature type="binding site" evidence="2">
    <location>
        <position position="173"/>
    </location>
    <ligand>
        <name>Zn(2+)</name>
        <dbReference type="ChEBI" id="CHEBI:29105"/>
        <note>catalytic</note>
    </ligand>
</feature>
<feature type="binding site" evidence="2">
    <location>
        <position position="184"/>
    </location>
    <ligand>
        <name>Zn(2+)</name>
        <dbReference type="ChEBI" id="CHEBI:29105"/>
        <note>catalytic</note>
    </ligand>
</feature>
<organism>
    <name type="scientific">Escherichia fergusonii (strain ATCC 35469 / DSM 13698 / CCUG 18766 / IAM 14443 / JCM 21226 / LMG 7866 / NBRC 102419 / NCTC 12128 / CDC 0568-73)</name>
    <dbReference type="NCBI Taxonomy" id="585054"/>
    <lineage>
        <taxon>Bacteria</taxon>
        <taxon>Pseudomonadati</taxon>
        <taxon>Pseudomonadota</taxon>
        <taxon>Gammaproteobacteria</taxon>
        <taxon>Enterobacterales</taxon>
        <taxon>Enterobacteriaceae</taxon>
        <taxon>Escherichia</taxon>
    </lineage>
</organism>